<proteinExistence type="evidence at protein level"/>
<reference key="1">
    <citation type="journal article" date="1996" name="Mol. Reprod. Dev.">
        <title>Sequence analysis of the conserved protamine gene cluster shows that it contains a fourth expressed gene.</title>
        <authorList>
            <person name="Schlueter G."/>
            <person name="Celik A.B."/>
            <person name="Obata R."/>
            <person name="Schlicker M."/>
            <person name="Hofferbert S."/>
            <person name="Schlung A."/>
            <person name="Adham I.M."/>
            <person name="Engel W."/>
        </authorList>
    </citation>
    <scope>NUCLEOTIDE SEQUENCE [GENOMIC DNA]</scope>
</reference>
<reference key="2">
    <citation type="journal article" date="2004" name="Nature">
        <title>The sequence and analysis of duplication-rich human chromosome 16.</title>
        <authorList>
            <person name="Martin J."/>
            <person name="Han C."/>
            <person name="Gordon L.A."/>
            <person name="Terry A."/>
            <person name="Prabhakar S."/>
            <person name="She X."/>
            <person name="Xie G."/>
            <person name="Hellsten U."/>
            <person name="Chan Y.M."/>
            <person name="Altherr M."/>
            <person name="Couronne O."/>
            <person name="Aerts A."/>
            <person name="Bajorek E."/>
            <person name="Black S."/>
            <person name="Blumer H."/>
            <person name="Branscomb E."/>
            <person name="Brown N.C."/>
            <person name="Bruno W.J."/>
            <person name="Buckingham J.M."/>
            <person name="Callen D.F."/>
            <person name="Campbell C.S."/>
            <person name="Campbell M.L."/>
            <person name="Campbell E.W."/>
            <person name="Caoile C."/>
            <person name="Challacombe J.F."/>
            <person name="Chasteen L.A."/>
            <person name="Chertkov O."/>
            <person name="Chi H.C."/>
            <person name="Christensen M."/>
            <person name="Clark L.M."/>
            <person name="Cohn J.D."/>
            <person name="Denys M."/>
            <person name="Detter J.C."/>
            <person name="Dickson M."/>
            <person name="Dimitrijevic-Bussod M."/>
            <person name="Escobar J."/>
            <person name="Fawcett J.J."/>
            <person name="Flowers D."/>
            <person name="Fotopulos D."/>
            <person name="Glavina T."/>
            <person name="Gomez M."/>
            <person name="Gonzales E."/>
            <person name="Goodstein D."/>
            <person name="Goodwin L.A."/>
            <person name="Grady D.L."/>
            <person name="Grigoriev I."/>
            <person name="Groza M."/>
            <person name="Hammon N."/>
            <person name="Hawkins T."/>
            <person name="Haydu L."/>
            <person name="Hildebrand C.E."/>
            <person name="Huang W."/>
            <person name="Israni S."/>
            <person name="Jett J."/>
            <person name="Jewett P.B."/>
            <person name="Kadner K."/>
            <person name="Kimball H."/>
            <person name="Kobayashi A."/>
            <person name="Krawczyk M.-C."/>
            <person name="Leyba T."/>
            <person name="Longmire J.L."/>
            <person name="Lopez F."/>
            <person name="Lou Y."/>
            <person name="Lowry S."/>
            <person name="Ludeman T."/>
            <person name="Manohar C.F."/>
            <person name="Mark G.A."/>
            <person name="McMurray K.L."/>
            <person name="Meincke L.J."/>
            <person name="Morgan J."/>
            <person name="Moyzis R.K."/>
            <person name="Mundt M.O."/>
            <person name="Munk A.C."/>
            <person name="Nandkeshwar R.D."/>
            <person name="Pitluck S."/>
            <person name="Pollard M."/>
            <person name="Predki P."/>
            <person name="Parson-Quintana B."/>
            <person name="Ramirez L."/>
            <person name="Rash S."/>
            <person name="Retterer J."/>
            <person name="Ricke D.O."/>
            <person name="Robinson D.L."/>
            <person name="Rodriguez A."/>
            <person name="Salamov A."/>
            <person name="Saunders E.H."/>
            <person name="Scott D."/>
            <person name="Shough T."/>
            <person name="Stallings R.L."/>
            <person name="Stalvey M."/>
            <person name="Sutherland R.D."/>
            <person name="Tapia R."/>
            <person name="Tesmer J.G."/>
            <person name="Thayer N."/>
            <person name="Thompson L.S."/>
            <person name="Tice H."/>
            <person name="Torney D.C."/>
            <person name="Tran-Gyamfi M."/>
            <person name="Tsai M."/>
            <person name="Ulanovsky L.E."/>
            <person name="Ustaszewska A."/>
            <person name="Vo N."/>
            <person name="White P.S."/>
            <person name="Williams A.L."/>
            <person name="Wills P.L."/>
            <person name="Wu J.-R."/>
            <person name="Wu K."/>
            <person name="Yang J."/>
            <person name="DeJong P."/>
            <person name="Bruce D."/>
            <person name="Doggett N.A."/>
            <person name="Deaven L."/>
            <person name="Schmutz J."/>
            <person name="Grimwood J."/>
            <person name="Richardson P."/>
            <person name="Rokhsar D.S."/>
            <person name="Eichler E.E."/>
            <person name="Gilna P."/>
            <person name="Lucas S.M."/>
            <person name="Myers R.M."/>
            <person name="Rubin E.M."/>
            <person name="Pennacchio L.A."/>
        </authorList>
    </citation>
    <scope>NUCLEOTIDE SEQUENCE [LARGE SCALE GENOMIC DNA]</scope>
</reference>
<organism>
    <name type="scientific">Homo sapiens</name>
    <name type="common">Human</name>
    <dbReference type="NCBI Taxonomy" id="9606"/>
    <lineage>
        <taxon>Eukaryota</taxon>
        <taxon>Metazoa</taxon>
        <taxon>Chordata</taxon>
        <taxon>Craniata</taxon>
        <taxon>Vertebrata</taxon>
        <taxon>Euteleostomi</taxon>
        <taxon>Mammalia</taxon>
        <taxon>Eutheria</taxon>
        <taxon>Euarchontoglires</taxon>
        <taxon>Primates</taxon>
        <taxon>Haplorrhini</taxon>
        <taxon>Catarrhini</taxon>
        <taxon>Hominidae</taxon>
        <taxon>Homo</taxon>
    </lineage>
</organism>
<name>PRM3_HUMAN</name>
<protein>
    <recommendedName>
        <fullName>Protamine-3</fullName>
    </recommendedName>
    <alternativeName>
        <fullName>Sperm protamine P3</fullName>
    </alternativeName>
</protein>
<accession>Q9NNZ6</accession>
<comment type="function">
    <text evidence="1">Protamines substitute for histones in the chromatin of sperm during the haploid phase of spermatogenesis. They compact sperm DNA into a highly condensed, stable and inactive complex (By similarity).</text>
</comment>
<comment type="subcellular location">
    <subcellularLocation>
        <location evidence="1">Nucleus</location>
    </subcellularLocation>
    <subcellularLocation>
        <location evidence="1">Chromosome</location>
    </subcellularLocation>
</comment>
<comment type="similarity">
    <text evidence="4">Belongs to the protamine P3 family.</text>
</comment>
<dbReference type="EMBL" id="Z46940">
    <property type="protein sequence ID" value="CAB92526.1"/>
    <property type="molecule type" value="Genomic_DNA"/>
</dbReference>
<dbReference type="EMBL" id="KF459690">
    <property type="status" value="NOT_ANNOTATED_CDS"/>
    <property type="molecule type" value="Genomic_DNA"/>
</dbReference>
<dbReference type="EMBL" id="AC009121">
    <property type="status" value="NOT_ANNOTATED_CDS"/>
    <property type="molecule type" value="Genomic_DNA"/>
</dbReference>
<dbReference type="CCDS" id="CCDS76821.1"/>
<dbReference type="RefSeq" id="NP_067070.2">
    <property type="nucleotide sequence ID" value="NM_021247.3"/>
</dbReference>
<dbReference type="IntAct" id="Q9NNZ6">
    <property type="interactions" value="2"/>
</dbReference>
<dbReference type="STRING" id="9606.ENSP00000325638"/>
<dbReference type="PhosphoSitePlus" id="Q9NNZ6"/>
<dbReference type="BioMuta" id="PRM3"/>
<dbReference type="DMDM" id="74734290"/>
<dbReference type="MassIVE" id="Q9NNZ6"/>
<dbReference type="PaxDb" id="9606-ENSP00000325638"/>
<dbReference type="PeptideAtlas" id="Q9NNZ6"/>
<dbReference type="ProteomicsDB" id="81879"/>
<dbReference type="DNASU" id="58531"/>
<dbReference type="Ensembl" id="ENST00000327157.4">
    <property type="protein sequence ID" value="ENSP00000325638.2"/>
    <property type="gene ID" value="ENSG00000178257.4"/>
</dbReference>
<dbReference type="GeneID" id="58531"/>
<dbReference type="KEGG" id="hsa:58531"/>
<dbReference type="MANE-Select" id="ENST00000327157.4">
    <property type="protein sequence ID" value="ENSP00000325638.2"/>
    <property type="RefSeq nucleotide sequence ID" value="NM_021247.3"/>
    <property type="RefSeq protein sequence ID" value="NP_067070.2"/>
</dbReference>
<dbReference type="UCSC" id="uc002dat.3">
    <property type="organism name" value="human"/>
</dbReference>
<dbReference type="AGR" id="HGNC:13732"/>
<dbReference type="CTD" id="58531"/>
<dbReference type="DisGeNET" id="58531"/>
<dbReference type="GeneCards" id="PRM3"/>
<dbReference type="HGNC" id="HGNC:13732">
    <property type="gene designation" value="PRM3"/>
</dbReference>
<dbReference type="HPA" id="ENSG00000178257">
    <property type="expression patterns" value="Tissue enriched (testis)"/>
</dbReference>
<dbReference type="neXtProt" id="NX_Q9NNZ6"/>
<dbReference type="OpenTargets" id="ENSG00000178257"/>
<dbReference type="PharmGKB" id="PA33794"/>
<dbReference type="VEuPathDB" id="HostDB:ENSG00000178257"/>
<dbReference type="eggNOG" id="ENOG502T3TU">
    <property type="taxonomic scope" value="Eukaryota"/>
</dbReference>
<dbReference type="GeneTree" id="ENSGT00390000001558"/>
<dbReference type="HOGENOM" id="CLU_2398985_0_0_1"/>
<dbReference type="InParanoid" id="Q9NNZ6"/>
<dbReference type="OMA" id="RCAKLNT"/>
<dbReference type="OrthoDB" id="9837884at2759"/>
<dbReference type="PAN-GO" id="Q9NNZ6">
    <property type="GO annotations" value="2 GO annotations based on evolutionary models"/>
</dbReference>
<dbReference type="PhylomeDB" id="Q9NNZ6"/>
<dbReference type="PathwayCommons" id="Q9NNZ6"/>
<dbReference type="SignaLink" id="Q9NNZ6"/>
<dbReference type="Pharos" id="Q9NNZ6">
    <property type="development level" value="Tdark"/>
</dbReference>
<dbReference type="PRO" id="PR:Q9NNZ6"/>
<dbReference type="Proteomes" id="UP000005640">
    <property type="component" value="Chromosome 16"/>
</dbReference>
<dbReference type="RNAct" id="Q9NNZ6">
    <property type="molecule type" value="protein"/>
</dbReference>
<dbReference type="Bgee" id="ENSG00000178257">
    <property type="expression patterns" value="Expressed in male germ line stem cell (sensu Vertebrata) in testis and 83 other cell types or tissues"/>
</dbReference>
<dbReference type="GO" id="GO:0005737">
    <property type="term" value="C:cytoplasm"/>
    <property type="evidence" value="ECO:0000318"/>
    <property type="project" value="GO_Central"/>
</dbReference>
<dbReference type="GO" id="GO:0000786">
    <property type="term" value="C:nucleosome"/>
    <property type="evidence" value="ECO:0007669"/>
    <property type="project" value="UniProtKB-KW"/>
</dbReference>
<dbReference type="GO" id="GO:0005634">
    <property type="term" value="C:nucleus"/>
    <property type="evidence" value="ECO:0007669"/>
    <property type="project" value="UniProtKB-SubCell"/>
</dbReference>
<dbReference type="GO" id="GO:0003677">
    <property type="term" value="F:DNA binding"/>
    <property type="evidence" value="ECO:0007669"/>
    <property type="project" value="UniProtKB-KW"/>
</dbReference>
<dbReference type="GO" id="GO:0030154">
    <property type="term" value="P:cell differentiation"/>
    <property type="evidence" value="ECO:0007669"/>
    <property type="project" value="UniProtKB-KW"/>
</dbReference>
<dbReference type="GO" id="GO:0030261">
    <property type="term" value="P:chromosome condensation"/>
    <property type="evidence" value="ECO:0007669"/>
    <property type="project" value="UniProtKB-KW"/>
</dbReference>
<dbReference type="GO" id="GO:0030317">
    <property type="term" value="P:flagellated sperm motility"/>
    <property type="evidence" value="ECO:0000318"/>
    <property type="project" value="GO_Central"/>
</dbReference>
<dbReference type="GO" id="GO:0007283">
    <property type="term" value="P:spermatogenesis"/>
    <property type="evidence" value="ECO:0007669"/>
    <property type="project" value="UniProtKB-KW"/>
</dbReference>
<dbReference type="InterPro" id="IPR026077">
    <property type="entry name" value="PRMP3"/>
</dbReference>
<dbReference type="PANTHER" id="PTHR14317:SF0">
    <property type="entry name" value="PROTAMINE-3"/>
    <property type="match status" value="1"/>
</dbReference>
<dbReference type="PANTHER" id="PTHR14317">
    <property type="entry name" value="SPERM PROTAMINE P3"/>
    <property type="match status" value="1"/>
</dbReference>
<sequence length="103" mass="11269">MGSRCAKLNTGQSPGHSPGHSTGHGRGHESSMKKLMACVSQDNFSLSSAGEEEEEEEEEGEEEEKEELPVQGKLLLLEPERQEEGHKDNAEAQQSPEPKRTPS</sequence>
<gene>
    <name type="primary">PRM3</name>
</gene>
<feature type="chain" id="PRO_0000261158" description="Protamine-3">
    <location>
        <begin position="1"/>
        <end position="103"/>
    </location>
</feature>
<feature type="region of interest" description="Disordered" evidence="3">
    <location>
        <begin position="1"/>
        <end position="103"/>
    </location>
</feature>
<feature type="compositionally biased region" description="Low complexity" evidence="3">
    <location>
        <begin position="10"/>
        <end position="21"/>
    </location>
</feature>
<feature type="compositionally biased region" description="Acidic residues" evidence="3">
    <location>
        <begin position="50"/>
        <end position="66"/>
    </location>
</feature>
<feature type="compositionally biased region" description="Basic and acidic residues" evidence="3">
    <location>
        <begin position="78"/>
        <end position="90"/>
    </location>
</feature>
<feature type="modified residue" description="Phosphoserine" evidence="2">
    <location>
        <position position="95"/>
    </location>
</feature>
<feature type="sequence variant" id="VAR_034414" description="In dbSNP:rs429744.">
    <original>R</original>
    <variation>Q</variation>
    <location>
        <position position="100"/>
    </location>
</feature>
<feature type="sequence conflict" description="In Ref. 1; CAB92526." ref="1">
    <original>H</original>
    <variation>Q</variation>
    <location>
        <position position="86"/>
    </location>
</feature>
<keyword id="KW-0158">Chromosome</keyword>
<keyword id="KW-0217">Developmental protein</keyword>
<keyword id="KW-0221">Differentiation</keyword>
<keyword id="KW-0226">DNA condensation</keyword>
<keyword id="KW-0238">DNA-binding</keyword>
<keyword id="KW-0544">Nucleosome core</keyword>
<keyword id="KW-0539">Nucleus</keyword>
<keyword id="KW-0597">Phosphoprotein</keyword>
<keyword id="KW-1267">Proteomics identification</keyword>
<keyword id="KW-1185">Reference proteome</keyword>
<keyword id="KW-0744">Spermatogenesis</keyword>
<evidence type="ECO:0000250" key="1"/>
<evidence type="ECO:0000250" key="2">
    <source>
        <dbReference type="UniProtKB" id="Q64256"/>
    </source>
</evidence>
<evidence type="ECO:0000256" key="3">
    <source>
        <dbReference type="SAM" id="MobiDB-lite"/>
    </source>
</evidence>
<evidence type="ECO:0000305" key="4"/>